<reference key="1">
    <citation type="journal article" date="1990" name="J. Gen. Virol.">
        <title>Nucleotide sequence of the glycoprotein S gene of bovine enteric coronavirus and comparison with the S proteins of two mouse hepatitis virus strains.</title>
        <authorList>
            <person name="Boireau P."/>
            <person name="Cruciere C."/>
            <person name="Laporte J."/>
        </authorList>
    </citation>
    <scope>NUCLEOTIDE SEQUENCE [GENOMIC RNA]</scope>
</reference>
<gene>
    <name evidence="2" type="primary">S</name>
    <name type="ORF">3</name>
</gene>
<sequence>MFLILLISLPMALAVIGDLKCTTVSINDVDTGVPSISTDTVDVTNGLGTYYVLDRVYLNTTLLLNGYYPTSGSTYRNMALKGTLLLSTLWFKPPFLSDFINGIFAKVKNTKVIKHGVMYSEFPAITIGSTFVNTSYSVVVQPHTTNLDNKLQGLLEISVCQYTMCEYPNTICHPNLGNRRVELWHWDTGVVSCLYKRNFTYDVNADYLYFHFYQEGGTFYAYFTDTGVVTKFLFNVYLGTVLSHYYVMPLTCNSAMTLEYWVTPLTSKQYLLAFNQDGVIFNAVDCKSDFMSEIKCKTLSIAPSTGVYELNGYTVQPIADVYRRIPNLPDCNIEAWLNDKSVPSPLNWERKTFSNCNFNMSSLMSFIQADSFTCNNIDAAKIYGMCFSSITIDKFAIPNGRKVDLQLGNLGYLQSFNYRIDTTATSCQLYYNLPAANVSLSRFNPSIWNRRFGFTEQSVFKPQPVGVFTDHDVVYAQHCFKAPTNFCPCKLDGSLCVGNGPGIDAGYKNSGIGTCPAGTNYLTCHNAAQCNCLCTPDPITSKSTGPYKCPQTKYLVGIGEHCSGLAIKSDYCGGNPCTCQPQAFLGWSVDSCLQGDRCNIFANFILHDVNSGTTCSTDLQKSNTDIILGVCVNYDLYGITGQGIFVEANATYYNSWQNLLYDSNGNLYGFRDYLTNRTFMIRSCYSGRVSAAFHANSSEPALLFRNIKCNYVFNNTLSRQLQPINYFDSYLGCVVNADNSTASAVQTCDLTVGSGYCVDYSTKRRSVRAITTGYRFTNFEPFTVNSVNDSLEPVGGLYEIQIPSEFTIGNMEEFIQTSSPKVTIDCSAFVCGDCAACKSQLVEYGSFCDNINAILTEVNELLDTTQLQVANSLMNGVTLSTKLKDGVNFNVDDINFSPVLGCLGSECNKVSSRSAIEDLLFSKVKLSDVGFVEAYNNCTGGAEIRDLICVQSYNGIKVLPPLLSENQISGYTLAATSASLFPPWSAAAGVPFYLNVQYRINGIGVTMDVLSQNQKLIANAFNNALDAIQEGFDATNSALVKIQAVVNANAEALNNLLQQLSNRFGAISSSLQEILSRLDALEAQRQIDRLINGRFTALNAYVSQQLSDSTLVKFSAAQAMEKVNECVKSQSSRINFCGNGNHIISLVQNAPYGLYFIHFSYVPTKYVTAKVSPGLCIAGDRGIAPKSGYFVNVNNTWMFTGSGYYYPEPITGNNVVVMSTCAVNYTKAPDVMLNISTPNLPDFKEELDQWFKNQTSVAPDLSLDYINVTFLDLQDEMNRLQEAIKLLNQSYINLKDIGTYEYYVKWPWYVWLLIGFAGVAMLVLLFFICCCTGCGTSCFKKCGGCCDDYTGHQELVIKTSHDD</sequence>
<name>SPIKE_CVBF</name>
<evidence type="ECO:0000250" key="1"/>
<evidence type="ECO:0000255" key="2">
    <source>
        <dbReference type="HAMAP-Rule" id="MF_04099"/>
    </source>
</evidence>
<evidence type="ECO:0000255" key="3">
    <source>
        <dbReference type="PROSITE-ProRule" id="PRU01269"/>
    </source>
</evidence>
<evidence type="ECO:0000255" key="4">
    <source>
        <dbReference type="PROSITE-ProRule" id="PRU01270"/>
    </source>
</evidence>
<organismHost>
    <name type="scientific">Bos taurus</name>
    <name type="common">Bovine</name>
    <dbReference type="NCBI Taxonomy" id="9913"/>
</organismHost>
<comment type="function">
    <molecule>Spike protein S1</molecule>
    <text evidence="2">Attaches the virion to the cell membrane by interacting with host receptor, initiating the infection.</text>
</comment>
<comment type="function">
    <molecule>Spike protein S2</molecule>
    <text evidence="2">Mediates fusion of the virion and cellular membranes by acting as a class I viral fusion protein. Under the current model, the protein has at least three conformational states: pre-fusion native state, pre-hairpin intermediate state, and post-fusion hairpin state. During viral and target cell membrane fusion, the coiled coil regions (heptad repeats) assume a trimer-of-hairpins structure, positioning the fusion peptide in close proximity to the C-terminal region of the ectodomain. The formation of this structure appears to drive apposition and subsequent fusion of viral and target cell membranes.</text>
</comment>
<comment type="function">
    <molecule>Spike protein S2'</molecule>
    <text evidence="2">Acts as a viral fusion peptide which is unmasked following S2 cleavage occurring upon virus endocytosis.</text>
</comment>
<comment type="subunit">
    <text evidence="2">Homotrimer; each monomer consists of a S1 and a S2 subunit. The resulting peplomers protrude from the virus surface as spikes.</text>
</comment>
<comment type="subcellular location">
    <subcellularLocation>
        <location evidence="2">Virion membrane</location>
        <topology evidence="2">Single-pass type I membrane protein</topology>
    </subcellularLocation>
    <subcellularLocation>
        <location evidence="2">Host endoplasmic reticulum-Golgi intermediate compartment membrane</location>
        <topology evidence="2">Single-pass type I membrane protein</topology>
    </subcellularLocation>
    <subcellularLocation>
        <location evidence="2">Host cell membrane</location>
        <topology evidence="2">Single-pass type I membrane protein</topology>
    </subcellularLocation>
    <text evidence="2">Accumulates in the endoplasmic reticulum-Golgi intermediate compartment, where it participates in virus particle assembly. Some S oligomers are transported to the host plasma membrane, where they may mediate cell-cell fusion.</text>
</comment>
<comment type="domain">
    <text evidence="2">Fusion peptide 1 (FP1) and fusion peptide 2 (FP2) function cooperatively and have a membrane-ordering effect on lipid headgroups and shallow hydrophobic regions of target bilayers. They are considered as two domains of an extended, bipartite FP. The membrane-ordering activity is calcium-dependent and also dependent on correct folding, which is maintained by an internal disulfide bond in FP2.</text>
</comment>
<comment type="PTM">
    <text evidence="2">Specific enzymatic cleavages in vivo yield mature proteins. The precursor is processed into S1 and S2 by host cell furin or another cellular protease to yield the mature S1 and S2 proteins. Additionally, a second cleavage leads to the release of a fusion peptide after viral attachment to host cell receptor.</text>
</comment>
<comment type="PTM">
    <text evidence="2">The cytoplasmic Cys-rich domain is palmitoylated. Spike glycoprotein is digested within host endosomes.</text>
</comment>
<comment type="similarity">
    <text evidence="2">Belongs to the betacoronaviruses spike protein family.</text>
</comment>
<protein>
    <recommendedName>
        <fullName evidence="2">Spike glycoprotein</fullName>
        <shortName evidence="2">S glycoprotein</shortName>
    </recommendedName>
    <alternativeName>
        <fullName evidence="2">E2</fullName>
    </alternativeName>
    <alternativeName>
        <fullName evidence="2">Peplomer protein</fullName>
    </alternativeName>
    <component>
        <recommendedName>
            <fullName evidence="2">Spike protein S1</fullName>
        </recommendedName>
    </component>
    <component>
        <recommendedName>
            <fullName evidence="2">Spike protein S2</fullName>
        </recommendedName>
    </component>
    <component>
        <recommendedName>
            <fullName evidence="2">Spike protein S2'</fullName>
        </recommendedName>
    </component>
</protein>
<feature type="signal peptide" evidence="2">
    <location>
        <begin position="1"/>
        <end position="13"/>
    </location>
</feature>
<feature type="chain" id="PRO_0000037184" description="Spike glycoprotein">
    <location>
        <begin position="14"/>
        <end position="1363"/>
    </location>
</feature>
<feature type="chain" id="PRO_0000037185" description="Spike protein S1">
    <location>
        <begin position="14"/>
        <end position="768"/>
    </location>
</feature>
<feature type="chain" id="PRO_0000037186" description="Spike protein S2">
    <location>
        <begin position="769"/>
        <end position="1363"/>
    </location>
</feature>
<feature type="chain" id="PRO_0000444069" description="Spike protein S2'" evidence="2">
    <location>
        <begin position="914"/>
        <end position="1363"/>
    </location>
</feature>
<feature type="topological domain" description="Extracellular" evidence="2">
    <location>
        <begin position="14"/>
        <end position="1307"/>
    </location>
</feature>
<feature type="transmembrane region" description="Helical" evidence="2">
    <location>
        <begin position="1308"/>
        <end position="1328"/>
    </location>
</feature>
<feature type="topological domain" description="Cytoplasmic" evidence="2">
    <location>
        <begin position="1329"/>
        <end position="1363"/>
    </location>
</feature>
<feature type="domain" description="BetaCoV S1-NTD" evidence="4">
    <location>
        <begin position="15"/>
        <end position="298"/>
    </location>
</feature>
<feature type="domain" description="BetaCoV S1-CTD" evidence="3">
    <location>
        <begin position="329"/>
        <end position="617"/>
    </location>
</feature>
<feature type="region of interest" description="Fusion peptide 1" evidence="2">
    <location>
        <begin position="914"/>
        <end position="935"/>
    </location>
</feature>
<feature type="region of interest" description="Fusion peptide 2" evidence="2">
    <location>
        <begin position="933"/>
        <end position="953"/>
    </location>
</feature>
<feature type="region of interest" description="Heptad repeat 1" evidence="2">
    <location>
        <begin position="1014"/>
        <end position="1064"/>
    </location>
</feature>
<feature type="region of interest" description="Heptad repeat 2" evidence="2">
    <location>
        <begin position="1258"/>
        <end position="1296"/>
    </location>
</feature>
<feature type="coiled-coil region" evidence="2">
    <location>
        <begin position="1043"/>
        <end position="1087"/>
    </location>
</feature>
<feature type="coiled-coil region" evidence="2">
    <location>
        <begin position="1269"/>
        <end position="1297"/>
    </location>
</feature>
<feature type="short sequence motif" description="KxHxx" evidence="2">
    <location>
        <begin position="1359"/>
        <end position="1363"/>
    </location>
</feature>
<feature type="site" description="Cleavage; by host" evidence="1">
    <location>
        <begin position="768"/>
        <end position="769"/>
    </location>
</feature>
<feature type="site" description="Cleavage" evidence="2">
    <location>
        <begin position="913"/>
        <end position="914"/>
    </location>
</feature>
<feature type="glycosylation site" description="N-linked (GlcNAc...) asparagine; by host" evidence="2">
    <location>
        <position position="59"/>
    </location>
</feature>
<feature type="glycosylation site" description="N-linked (GlcNAc...) asparagine; by host" evidence="2">
    <location>
        <position position="133"/>
    </location>
</feature>
<feature type="glycosylation site" description="N-linked (GlcNAc...) asparagine; by host" evidence="2">
    <location>
        <position position="198"/>
    </location>
</feature>
<feature type="glycosylation site" description="N-linked (GlcNAc...) asparagine; by host" evidence="2">
    <location>
        <position position="359"/>
    </location>
</feature>
<feature type="glycosylation site" description="N-linked (GlcNAc...) asparagine; by host" evidence="2">
    <location>
        <position position="437"/>
    </location>
</feature>
<feature type="glycosylation site" description="N-linked (GlcNAc...) asparagine; by host" evidence="2">
    <location>
        <position position="649"/>
    </location>
</feature>
<feature type="glycosylation site" description="N-linked (GlcNAc...) asparagine; by host" evidence="2">
    <location>
        <position position="676"/>
    </location>
</feature>
<feature type="glycosylation site" description="N-linked (GlcNAc...) asparagine; by host" evidence="2">
    <location>
        <position position="696"/>
    </location>
</feature>
<feature type="glycosylation site" description="N-linked (GlcNAc...) asparagine; by host" evidence="2">
    <location>
        <position position="714"/>
    </location>
</feature>
<feature type="glycosylation site" description="N-linked (GlcNAc...) asparagine; by host" evidence="2">
    <location>
        <position position="739"/>
    </location>
</feature>
<feature type="glycosylation site" description="N-linked (GlcNAc...) asparagine; by host" evidence="2">
    <location>
        <position position="788"/>
    </location>
</feature>
<feature type="glycosylation site" description="N-linked (GlcNAc...) asparagine; by host" evidence="2">
    <location>
        <position position="937"/>
    </location>
</feature>
<feature type="glycosylation site" description="N-linked (GlcNAc...) asparagine; by host" evidence="2">
    <location>
        <position position="1194"/>
    </location>
</feature>
<feature type="glycosylation site" description="N-linked (GlcNAc...) asparagine; by host" evidence="2">
    <location>
        <position position="1224"/>
    </location>
</feature>
<feature type="glycosylation site" description="N-linked (GlcNAc...) asparagine; by host" evidence="2">
    <location>
        <position position="1234"/>
    </location>
</feature>
<feature type="glycosylation site" description="N-linked (GlcNAc...) asparagine; by host" evidence="2">
    <location>
        <position position="1253"/>
    </location>
</feature>
<feature type="glycosylation site" description="N-linked (GlcNAc...) asparagine; by host" evidence="2">
    <location>
        <position position="1267"/>
    </location>
</feature>
<feature type="glycosylation site" description="N-linked (GlcNAc...) asparagine; by host" evidence="2">
    <location>
        <position position="1288"/>
    </location>
</feature>
<feature type="disulfide bond" evidence="4">
    <location>
        <begin position="21"/>
        <end position="165"/>
    </location>
</feature>
<feature type="disulfide bond" evidence="4">
    <location>
        <begin position="160"/>
        <end position="193"/>
    </location>
</feature>
<feature type="disulfide bond" evidence="4">
    <location>
        <begin position="172"/>
        <end position="252"/>
    </location>
</feature>
<feature type="disulfide bond" evidence="4">
    <location>
        <begin position="286"/>
        <end position="296"/>
    </location>
</feature>
<feature type="disulfide bond" evidence="3">
    <location>
        <begin position="331"/>
        <end position="356"/>
    </location>
</feature>
<feature type="disulfide bond" evidence="3">
    <location>
        <begin position="374"/>
        <end position="427"/>
    </location>
</feature>
<feature type="disulfide bond" evidence="3">
    <location>
        <begin position="386"/>
        <end position="615"/>
    </location>
</feature>
<feature type="disulfide bond" evidence="2">
    <location>
        <begin position="938"/>
        <end position="949"/>
    </location>
</feature>
<organism>
    <name type="scientific">Bovine coronavirus (strain F15)</name>
    <name type="common">BCoV</name>
    <name type="synonym">BCV</name>
    <dbReference type="NCBI Taxonomy" id="11129"/>
    <lineage>
        <taxon>Viruses</taxon>
        <taxon>Riboviria</taxon>
        <taxon>Orthornavirae</taxon>
        <taxon>Pisuviricota</taxon>
        <taxon>Pisoniviricetes</taxon>
        <taxon>Nidovirales</taxon>
        <taxon>Cornidovirineae</taxon>
        <taxon>Coronaviridae</taxon>
        <taxon>Orthocoronavirinae</taxon>
        <taxon>Betacoronavirus</taxon>
        <taxon>Embecovirus</taxon>
        <taxon>Betacoronavirus 1</taxon>
    </lineage>
</organism>
<accession>P25190</accession>
<keyword id="KW-0175">Coiled coil</keyword>
<keyword id="KW-1015">Disulfide bond</keyword>
<keyword id="KW-1170">Fusion of virus membrane with host endosomal membrane</keyword>
<keyword id="KW-1168">Fusion of virus membrane with host membrane</keyword>
<keyword id="KW-0325">Glycoprotein</keyword>
<keyword id="KW-1032">Host cell membrane</keyword>
<keyword id="KW-1043">Host membrane</keyword>
<keyword id="KW-0945">Host-virus interaction</keyword>
<keyword id="KW-0449">Lipoprotein</keyword>
<keyword id="KW-0472">Membrane</keyword>
<keyword id="KW-0564">Palmitate</keyword>
<keyword id="KW-0732">Signal</keyword>
<keyword id="KW-0812">Transmembrane</keyword>
<keyword id="KW-1133">Transmembrane helix</keyword>
<keyword id="KW-1161">Viral attachment to host cell</keyword>
<keyword id="KW-0261">Viral envelope protein</keyword>
<keyword id="KW-1162">Viral penetration into host cytoplasm</keyword>
<keyword id="KW-0946">Virion</keyword>
<keyword id="KW-0843">Virulence</keyword>
<keyword id="KW-1160">Virus entry into host cell</keyword>
<dbReference type="EMBL" id="D00731">
    <property type="protein sequence ID" value="BAA00631.1"/>
    <property type="molecule type" value="Genomic_RNA"/>
</dbReference>
<dbReference type="PIR" id="A34151">
    <property type="entry name" value="VGIHF1"/>
</dbReference>
<dbReference type="SMR" id="P25190"/>
<dbReference type="TCDB" id="1.G.18.1.2">
    <property type="family name" value="the sars-cov fusion peptide in the spike glycoprotein precursor (sars-fp) family"/>
</dbReference>
<dbReference type="GlyCosmos" id="P25190">
    <property type="glycosylation" value="18 sites, No reported glycans"/>
</dbReference>
<dbReference type="GO" id="GO:0044173">
    <property type="term" value="C:host cell endoplasmic reticulum-Golgi intermediate compartment membrane"/>
    <property type="evidence" value="ECO:0007669"/>
    <property type="project" value="UniProtKB-SubCell"/>
</dbReference>
<dbReference type="GO" id="GO:0020002">
    <property type="term" value="C:host cell plasma membrane"/>
    <property type="evidence" value="ECO:0007669"/>
    <property type="project" value="UniProtKB-SubCell"/>
</dbReference>
<dbReference type="GO" id="GO:0016020">
    <property type="term" value="C:membrane"/>
    <property type="evidence" value="ECO:0007669"/>
    <property type="project" value="UniProtKB-UniRule"/>
</dbReference>
<dbReference type="GO" id="GO:0019031">
    <property type="term" value="C:viral envelope"/>
    <property type="evidence" value="ECO:0007669"/>
    <property type="project" value="UniProtKB-UniRule"/>
</dbReference>
<dbReference type="GO" id="GO:0055036">
    <property type="term" value="C:virion membrane"/>
    <property type="evidence" value="ECO:0007669"/>
    <property type="project" value="UniProtKB-SubCell"/>
</dbReference>
<dbReference type="GO" id="GO:0075509">
    <property type="term" value="P:endocytosis involved in viral entry into host cell"/>
    <property type="evidence" value="ECO:0007669"/>
    <property type="project" value="UniProtKB-UniRule"/>
</dbReference>
<dbReference type="GO" id="GO:0039654">
    <property type="term" value="P:fusion of virus membrane with host endosome membrane"/>
    <property type="evidence" value="ECO:0007669"/>
    <property type="project" value="UniProtKB-UniRule"/>
</dbReference>
<dbReference type="GO" id="GO:0019064">
    <property type="term" value="P:fusion of virus membrane with host plasma membrane"/>
    <property type="evidence" value="ECO:0007669"/>
    <property type="project" value="UniProtKB-UniRule"/>
</dbReference>
<dbReference type="GO" id="GO:0046813">
    <property type="term" value="P:receptor-mediated virion attachment to host cell"/>
    <property type="evidence" value="ECO:0007669"/>
    <property type="project" value="UniProtKB-UniRule"/>
</dbReference>
<dbReference type="CDD" id="cd21485">
    <property type="entry name" value="HCoV-OC43-like_Spike_S1_RBD"/>
    <property type="match status" value="1"/>
</dbReference>
<dbReference type="CDD" id="cd22380">
    <property type="entry name" value="HKU1-CoV-like_Spike_SD1-2_S1-S2_S2"/>
    <property type="match status" value="1"/>
</dbReference>
<dbReference type="CDD" id="cd21625">
    <property type="entry name" value="MHV-like_Spike_S1_NTD"/>
    <property type="match status" value="1"/>
</dbReference>
<dbReference type="FunFam" id="1.20.5.300:FF:000003">
    <property type="entry name" value="Spike glycoprotein"/>
    <property type="match status" value="1"/>
</dbReference>
<dbReference type="FunFam" id="1.20.5.300:FF:000006">
    <property type="entry name" value="Spike glycoprotein"/>
    <property type="match status" value="1"/>
</dbReference>
<dbReference type="FunFam" id="2.60.120.960:FF:000002">
    <property type="entry name" value="Spike glycoprotein"/>
    <property type="match status" value="1"/>
</dbReference>
<dbReference type="FunFam" id="3.30.70.1840:FF:000003">
    <property type="entry name" value="Spike glycoprotein"/>
    <property type="match status" value="1"/>
</dbReference>
<dbReference type="Gene3D" id="1.20.5.300">
    <property type="match status" value="2"/>
</dbReference>
<dbReference type="Gene3D" id="3.30.70.1840">
    <property type="match status" value="1"/>
</dbReference>
<dbReference type="Gene3D" id="2.60.120.960">
    <property type="entry name" value="Spike glycoprotein, N-terminal domain"/>
    <property type="match status" value="1"/>
</dbReference>
<dbReference type="HAMAP" id="MF_04099">
    <property type="entry name" value="BETA_CORONA_SPIKE"/>
    <property type="match status" value="1"/>
</dbReference>
<dbReference type="InterPro" id="IPR032500">
    <property type="entry name" value="bCoV_S1_N"/>
</dbReference>
<dbReference type="InterPro" id="IPR042578">
    <property type="entry name" value="BETA_CORONA_SPIKE"/>
</dbReference>
<dbReference type="InterPro" id="IPR043607">
    <property type="entry name" value="CoV_S1_C"/>
</dbReference>
<dbReference type="InterPro" id="IPR043473">
    <property type="entry name" value="S2_sf_CoV"/>
</dbReference>
<dbReference type="InterPro" id="IPR043002">
    <property type="entry name" value="Spike_N_sf"/>
</dbReference>
<dbReference type="InterPro" id="IPR044339">
    <property type="entry name" value="Spike_S1_NTD_MHV-like"/>
</dbReference>
<dbReference type="InterPro" id="IPR018548">
    <property type="entry name" value="Spike_S1_RBD_bCoV"/>
</dbReference>
<dbReference type="InterPro" id="IPR044372">
    <property type="entry name" value="Spike_S1_RBD_HCoV-OC43-like"/>
</dbReference>
<dbReference type="InterPro" id="IPR036326">
    <property type="entry name" value="Spike_S1_RBD_sf_bCoV"/>
</dbReference>
<dbReference type="InterPro" id="IPR002552">
    <property type="entry name" value="Spike_S2_CoV"/>
</dbReference>
<dbReference type="InterPro" id="IPR043614">
    <property type="entry name" value="Spike_S2_CoV_C"/>
</dbReference>
<dbReference type="InterPro" id="IPR044873">
    <property type="entry name" value="Spike_S2_CoV_HR1"/>
</dbReference>
<dbReference type="InterPro" id="IPR044874">
    <property type="entry name" value="Spike_S2_CoV_HR2"/>
</dbReference>
<dbReference type="Pfam" id="PF16451">
    <property type="entry name" value="bCoV_S1_N"/>
    <property type="match status" value="1"/>
</dbReference>
<dbReference type="Pfam" id="PF09408">
    <property type="entry name" value="bCoV_S1_RBD"/>
    <property type="match status" value="1"/>
</dbReference>
<dbReference type="Pfam" id="PF19209">
    <property type="entry name" value="CoV_S1_C"/>
    <property type="match status" value="1"/>
</dbReference>
<dbReference type="Pfam" id="PF01601">
    <property type="entry name" value="CoV_S2"/>
    <property type="match status" value="1"/>
</dbReference>
<dbReference type="Pfam" id="PF19214">
    <property type="entry name" value="CoV_S2_C"/>
    <property type="match status" value="1"/>
</dbReference>
<dbReference type="SUPFAM" id="SSF111474">
    <property type="entry name" value="Coronavirus S2 glycoprotein"/>
    <property type="match status" value="2"/>
</dbReference>
<dbReference type="SUPFAM" id="SSF143587">
    <property type="entry name" value="SARS receptor-binding domain-like"/>
    <property type="match status" value="1"/>
</dbReference>
<dbReference type="PROSITE" id="PS51921">
    <property type="entry name" value="BCOV_S1_CTD"/>
    <property type="match status" value="1"/>
</dbReference>
<dbReference type="PROSITE" id="PS51922">
    <property type="entry name" value="BCOV_S1_NTD"/>
    <property type="match status" value="1"/>
</dbReference>
<dbReference type="PROSITE" id="PS51923">
    <property type="entry name" value="COV_S2_HR1"/>
    <property type="match status" value="1"/>
</dbReference>
<dbReference type="PROSITE" id="PS51924">
    <property type="entry name" value="COV_S2_HR2"/>
    <property type="match status" value="1"/>
</dbReference>
<proteinExistence type="inferred from homology"/>